<reference key="1">
    <citation type="journal article" date="2005" name="Nucleic Acids Res.">
        <title>Genome dynamics and diversity of Shigella species, the etiologic agents of bacillary dysentery.</title>
        <authorList>
            <person name="Yang F."/>
            <person name="Yang J."/>
            <person name="Zhang X."/>
            <person name="Chen L."/>
            <person name="Jiang Y."/>
            <person name="Yan Y."/>
            <person name="Tang X."/>
            <person name="Wang J."/>
            <person name="Xiong Z."/>
            <person name="Dong J."/>
            <person name="Xue Y."/>
            <person name="Zhu Y."/>
            <person name="Xu X."/>
            <person name="Sun L."/>
            <person name="Chen S."/>
            <person name="Nie H."/>
            <person name="Peng J."/>
            <person name="Xu J."/>
            <person name="Wang Y."/>
            <person name="Yuan Z."/>
            <person name="Wen Y."/>
            <person name="Yao Z."/>
            <person name="Shen Y."/>
            <person name="Qiang B."/>
            <person name="Hou Y."/>
            <person name="Yu J."/>
            <person name="Jin Q."/>
        </authorList>
    </citation>
    <scope>NUCLEOTIDE SEQUENCE [LARGE SCALE GENOMIC DNA]</scope>
    <source>
        <strain>Sb227</strain>
    </source>
</reference>
<name>PRIB_SHIBS</name>
<gene>
    <name evidence="1" type="primary">priB</name>
    <name type="ordered locus">SBO_4253</name>
</gene>
<dbReference type="EMBL" id="CP000036">
    <property type="protein sequence ID" value="ABB68676.1"/>
    <property type="molecule type" value="Genomic_DNA"/>
</dbReference>
<dbReference type="RefSeq" id="WP_001296681.1">
    <property type="nucleotide sequence ID" value="NC_007613.1"/>
</dbReference>
<dbReference type="SMR" id="Q31TD2"/>
<dbReference type="GeneID" id="93777622"/>
<dbReference type="KEGG" id="sbo:SBO_4253"/>
<dbReference type="HOGENOM" id="CLU_166075_0_0_6"/>
<dbReference type="Proteomes" id="UP000007067">
    <property type="component" value="Chromosome"/>
</dbReference>
<dbReference type="GO" id="GO:1990077">
    <property type="term" value="C:primosome complex"/>
    <property type="evidence" value="ECO:0007669"/>
    <property type="project" value="UniProtKB-KW"/>
</dbReference>
<dbReference type="GO" id="GO:0003697">
    <property type="term" value="F:single-stranded DNA binding"/>
    <property type="evidence" value="ECO:0007669"/>
    <property type="project" value="UniProtKB-UniRule"/>
</dbReference>
<dbReference type="GO" id="GO:0006269">
    <property type="term" value="P:DNA replication, synthesis of primer"/>
    <property type="evidence" value="ECO:0007669"/>
    <property type="project" value="UniProtKB-KW"/>
</dbReference>
<dbReference type="CDD" id="cd04496">
    <property type="entry name" value="SSB_OBF"/>
    <property type="match status" value="1"/>
</dbReference>
<dbReference type="FunFam" id="2.40.50.140:FF:000077">
    <property type="entry name" value="Primosomal replication protein N"/>
    <property type="match status" value="1"/>
</dbReference>
<dbReference type="Gene3D" id="2.40.50.140">
    <property type="entry name" value="Nucleic acid-binding proteins"/>
    <property type="match status" value="1"/>
</dbReference>
<dbReference type="HAMAP" id="MF_00720">
    <property type="entry name" value="PriB"/>
    <property type="match status" value="1"/>
</dbReference>
<dbReference type="InterPro" id="IPR012340">
    <property type="entry name" value="NA-bd_OB-fold"/>
</dbReference>
<dbReference type="InterPro" id="IPR000424">
    <property type="entry name" value="Primosome_PriB/ssb"/>
</dbReference>
<dbReference type="InterPro" id="IPR023646">
    <property type="entry name" value="Prisomal_replication_PriB"/>
</dbReference>
<dbReference type="NCBIfam" id="TIGR04418">
    <property type="entry name" value="PriB_gamma"/>
    <property type="match status" value="1"/>
</dbReference>
<dbReference type="Pfam" id="PF22657">
    <property type="entry name" value="SSB_1"/>
    <property type="match status" value="1"/>
</dbReference>
<dbReference type="PIRSF" id="PIRSF003135">
    <property type="entry name" value="Primosomal_n"/>
    <property type="match status" value="1"/>
</dbReference>
<dbReference type="SUPFAM" id="SSF50249">
    <property type="entry name" value="Nucleic acid-binding proteins"/>
    <property type="match status" value="1"/>
</dbReference>
<dbReference type="PROSITE" id="PS50935">
    <property type="entry name" value="SSB"/>
    <property type="match status" value="1"/>
</dbReference>
<organism>
    <name type="scientific">Shigella boydii serotype 4 (strain Sb227)</name>
    <dbReference type="NCBI Taxonomy" id="300268"/>
    <lineage>
        <taxon>Bacteria</taxon>
        <taxon>Pseudomonadati</taxon>
        <taxon>Pseudomonadota</taxon>
        <taxon>Gammaproteobacteria</taxon>
        <taxon>Enterobacterales</taxon>
        <taxon>Enterobacteriaceae</taxon>
        <taxon>Shigella</taxon>
    </lineage>
</organism>
<protein>
    <recommendedName>
        <fullName evidence="1">Replication restart protein PriB</fullName>
    </recommendedName>
</protein>
<feature type="chain" id="PRO_1000083299" description="Replication restart protein PriB">
    <location>
        <begin position="1"/>
        <end position="104"/>
    </location>
</feature>
<feature type="domain" description="SSB" evidence="1">
    <location>
        <begin position="1"/>
        <end position="101"/>
    </location>
</feature>
<keyword id="KW-0235">DNA replication</keyword>
<keyword id="KW-0238">DNA-binding</keyword>
<keyword id="KW-0639">Primosome</keyword>
<sequence length="104" mass="11472">MTNRLVLSGTVCRTPLRKVSPSGIPHCQFVLEHRSVQEEAGFHRQAWCQMPVIVSGHENQAITHSITVGSRITVQGFISCHKAKNGLSKMVLHAEQIELIDSGD</sequence>
<proteinExistence type="inferred from homology"/>
<comment type="function">
    <text evidence="1">Involved in the restart of stalled replication forks, which reloads the replicative helicase on sites other than the origin of replication; the PriA-PriB pathway is the major replication restart pathway. During primosome assembly it facilitates complex formation between PriA and DnaT on DNA; stabilizes PriA on DNA. Stimulates the DNA unwinding activity of PriA helicase.</text>
</comment>
<comment type="subunit">
    <text evidence="1">Homodimer. Interacts with PriA and DnaT. Component of the replication restart primosome. Primosome assembly occurs via a 'hand-off' mechanism. PriA binds to replication forks, subsequently PriB then DnaT bind; DnaT then displaces ssDNA to generate the helicase loading substrate.</text>
</comment>
<comment type="similarity">
    <text evidence="1">Belongs to the PriB family.</text>
</comment>
<accession>Q31TD2</accession>
<evidence type="ECO:0000255" key="1">
    <source>
        <dbReference type="HAMAP-Rule" id="MF_00720"/>
    </source>
</evidence>